<proteinExistence type="evidence at protein level"/>
<name>SCE3_SCHPO</name>
<comment type="subcellular location">
    <subcellularLocation>
        <location>Cytoplasm</location>
    </subcellularLocation>
</comment>
<accession>O14369</accession>
<protein>
    <recommendedName>
        <fullName>Probable RNA-binding protein sce3</fullName>
    </recommendedName>
</protein>
<gene>
    <name type="primary">sce3</name>
    <name type="ORF">SPBC18H10.04c</name>
</gene>
<reference key="1">
    <citation type="journal article" date="1997" name="Nucleic Acids Res.">
        <title>Sce3, a suppressor of the Schizosaccharomyces pombe septation mutant cdc11, encodes a putative RNA-binding protein.</title>
        <authorList>
            <person name="Schmidt S."/>
            <person name="Hofmann K."/>
            <person name="Simanis V."/>
        </authorList>
    </citation>
    <scope>NUCLEOTIDE SEQUENCE [GENOMIC DNA]</scope>
</reference>
<reference key="2">
    <citation type="journal article" date="2002" name="Nature">
        <title>The genome sequence of Schizosaccharomyces pombe.</title>
        <authorList>
            <person name="Wood V."/>
            <person name="Gwilliam R."/>
            <person name="Rajandream M.A."/>
            <person name="Lyne M.H."/>
            <person name="Lyne R."/>
            <person name="Stewart A."/>
            <person name="Sgouros J.G."/>
            <person name="Peat N."/>
            <person name="Hayles J."/>
            <person name="Baker S.G."/>
            <person name="Basham D."/>
            <person name="Bowman S."/>
            <person name="Brooks K."/>
            <person name="Brown D."/>
            <person name="Brown S."/>
            <person name="Chillingworth T."/>
            <person name="Churcher C.M."/>
            <person name="Collins M."/>
            <person name="Connor R."/>
            <person name="Cronin A."/>
            <person name="Davis P."/>
            <person name="Feltwell T."/>
            <person name="Fraser A."/>
            <person name="Gentles S."/>
            <person name="Goble A."/>
            <person name="Hamlin N."/>
            <person name="Harris D.E."/>
            <person name="Hidalgo J."/>
            <person name="Hodgson G."/>
            <person name="Holroyd S."/>
            <person name="Hornsby T."/>
            <person name="Howarth S."/>
            <person name="Huckle E.J."/>
            <person name="Hunt S."/>
            <person name="Jagels K."/>
            <person name="James K.D."/>
            <person name="Jones L."/>
            <person name="Jones M."/>
            <person name="Leather S."/>
            <person name="McDonald S."/>
            <person name="McLean J."/>
            <person name="Mooney P."/>
            <person name="Moule S."/>
            <person name="Mungall K.L."/>
            <person name="Murphy L.D."/>
            <person name="Niblett D."/>
            <person name="Odell C."/>
            <person name="Oliver K."/>
            <person name="O'Neil S."/>
            <person name="Pearson D."/>
            <person name="Quail M.A."/>
            <person name="Rabbinowitsch E."/>
            <person name="Rutherford K.M."/>
            <person name="Rutter S."/>
            <person name="Saunders D."/>
            <person name="Seeger K."/>
            <person name="Sharp S."/>
            <person name="Skelton J."/>
            <person name="Simmonds M.N."/>
            <person name="Squares R."/>
            <person name="Squares S."/>
            <person name="Stevens K."/>
            <person name="Taylor K."/>
            <person name="Taylor R.G."/>
            <person name="Tivey A."/>
            <person name="Walsh S.V."/>
            <person name="Warren T."/>
            <person name="Whitehead S."/>
            <person name="Woodward J.R."/>
            <person name="Volckaert G."/>
            <person name="Aert R."/>
            <person name="Robben J."/>
            <person name="Grymonprez B."/>
            <person name="Weltjens I."/>
            <person name="Vanstreels E."/>
            <person name="Rieger M."/>
            <person name="Schaefer M."/>
            <person name="Mueller-Auer S."/>
            <person name="Gabel C."/>
            <person name="Fuchs M."/>
            <person name="Duesterhoeft A."/>
            <person name="Fritzc C."/>
            <person name="Holzer E."/>
            <person name="Moestl D."/>
            <person name="Hilbert H."/>
            <person name="Borzym K."/>
            <person name="Langer I."/>
            <person name="Beck A."/>
            <person name="Lehrach H."/>
            <person name="Reinhardt R."/>
            <person name="Pohl T.M."/>
            <person name="Eger P."/>
            <person name="Zimmermann W."/>
            <person name="Wedler H."/>
            <person name="Wambutt R."/>
            <person name="Purnelle B."/>
            <person name="Goffeau A."/>
            <person name="Cadieu E."/>
            <person name="Dreano S."/>
            <person name="Gloux S."/>
            <person name="Lelaure V."/>
            <person name="Mottier S."/>
            <person name="Galibert F."/>
            <person name="Aves S.J."/>
            <person name="Xiang Z."/>
            <person name="Hunt C."/>
            <person name="Moore K."/>
            <person name="Hurst S.M."/>
            <person name="Lucas M."/>
            <person name="Rochet M."/>
            <person name="Gaillardin C."/>
            <person name="Tallada V.A."/>
            <person name="Garzon A."/>
            <person name="Thode G."/>
            <person name="Daga R.R."/>
            <person name="Cruzado L."/>
            <person name="Jimenez J."/>
            <person name="Sanchez M."/>
            <person name="del Rey F."/>
            <person name="Benito J."/>
            <person name="Dominguez A."/>
            <person name="Revuelta J.L."/>
            <person name="Moreno S."/>
            <person name="Armstrong J."/>
            <person name="Forsburg S.L."/>
            <person name="Cerutti L."/>
            <person name="Lowe T."/>
            <person name="McCombie W.R."/>
            <person name="Paulsen I."/>
            <person name="Potashkin J."/>
            <person name="Shpakovski G.V."/>
            <person name="Ussery D."/>
            <person name="Barrell B.G."/>
            <person name="Nurse P."/>
        </authorList>
    </citation>
    <scope>NUCLEOTIDE SEQUENCE [LARGE SCALE GENOMIC DNA]</scope>
    <source>
        <strain>972 / ATCC 24843</strain>
    </source>
</reference>
<reference key="3">
    <citation type="journal article" date="2008" name="J. Proteome Res.">
        <title>Phosphoproteome analysis of fission yeast.</title>
        <authorList>
            <person name="Wilson-Grady J.T."/>
            <person name="Villen J."/>
            <person name="Gygi S.P."/>
        </authorList>
    </citation>
    <scope>PHOSPHORYLATION [LARGE SCALE ANALYSIS] AT SER-49; SER-50; SER-60; THR-61; SER-64; SER-67; SER-71; SER-197; SER-250; SER-251; SER-252 AND SER-347</scope>
    <scope>IDENTIFICATION BY MASS SPECTROMETRY</scope>
</reference>
<sequence length="388" mass="42514">MGPKKSTKMSLNAFLGDESFGSTNWADDIDDLPALPQDRTTSTYRATPSSADAGYNAPSSTFESVRSPPESRREGGMGSGYQRDAIPIPSEPPFTAHVGNLSFDLTENDLGDFFGEGVTSIRLVIDPLTERSRGFGYVEFETADTLSAALALSGEDLMGRPVRITVAEPRRSFAREERSTGDWVRRGPLPPAEPAESPFGKRRTNSGRFRDPARDPSDRVREEPREWVRRGPLPPRESSERPRLNLKPRSSSNVNTEATPSATTTTSSKPKRDPFGGAKPVDNTSVLQRVEEKLAKRTQSFRREDNANRERSTSRKPSADKAEKTDKTDAIAEKVSDIRLGDGEKKSSETDSEVAATKTPATEDAPATNAGEAEEEEGWTKIGKGRKH</sequence>
<feature type="chain" id="PRO_0000081900" description="Probable RNA-binding protein sce3">
    <location>
        <begin position="1"/>
        <end position="388"/>
    </location>
</feature>
<feature type="domain" description="RRM" evidence="1">
    <location>
        <begin position="94"/>
        <end position="169"/>
    </location>
</feature>
<feature type="region of interest" description="Disordered" evidence="2">
    <location>
        <begin position="18"/>
        <end position="84"/>
    </location>
</feature>
<feature type="region of interest" description="Disordered" evidence="2">
    <location>
        <begin position="171"/>
        <end position="388"/>
    </location>
</feature>
<feature type="compositionally biased region" description="Polar residues" evidence="2">
    <location>
        <begin position="38"/>
        <end position="50"/>
    </location>
</feature>
<feature type="compositionally biased region" description="Basic and acidic residues" evidence="2">
    <location>
        <begin position="171"/>
        <end position="185"/>
    </location>
</feature>
<feature type="compositionally biased region" description="Basic and acidic residues" evidence="2">
    <location>
        <begin position="208"/>
        <end position="229"/>
    </location>
</feature>
<feature type="compositionally biased region" description="Polar residues" evidence="2">
    <location>
        <begin position="248"/>
        <end position="257"/>
    </location>
</feature>
<feature type="compositionally biased region" description="Low complexity" evidence="2">
    <location>
        <begin position="258"/>
        <end position="268"/>
    </location>
</feature>
<feature type="compositionally biased region" description="Basic and acidic residues" evidence="2">
    <location>
        <begin position="289"/>
        <end position="349"/>
    </location>
</feature>
<feature type="modified residue" description="Phosphoserine" evidence="3">
    <location>
        <position position="49"/>
    </location>
</feature>
<feature type="modified residue" description="Phosphoserine" evidence="3">
    <location>
        <position position="50"/>
    </location>
</feature>
<feature type="modified residue" description="Phosphoserine" evidence="3">
    <location>
        <position position="60"/>
    </location>
</feature>
<feature type="modified residue" description="Phosphothreonine" evidence="3">
    <location>
        <position position="61"/>
    </location>
</feature>
<feature type="modified residue" description="Phosphoserine" evidence="3">
    <location>
        <position position="64"/>
    </location>
</feature>
<feature type="modified residue" description="Phosphoserine" evidence="3">
    <location>
        <position position="67"/>
    </location>
</feature>
<feature type="modified residue" description="Phosphoserine" evidence="3">
    <location>
        <position position="71"/>
    </location>
</feature>
<feature type="modified residue" description="Phosphoserine" evidence="3">
    <location>
        <position position="197"/>
    </location>
</feature>
<feature type="modified residue" description="Phosphoserine" evidence="3">
    <location>
        <position position="250"/>
    </location>
</feature>
<feature type="modified residue" description="Phosphoserine" evidence="3">
    <location>
        <position position="251"/>
    </location>
</feature>
<feature type="modified residue" description="Phosphoserine" evidence="3">
    <location>
        <position position="252"/>
    </location>
</feature>
<feature type="modified residue" description="Phosphoserine" evidence="3">
    <location>
        <position position="347"/>
    </location>
</feature>
<organism>
    <name type="scientific">Schizosaccharomyces pombe (strain 972 / ATCC 24843)</name>
    <name type="common">Fission yeast</name>
    <dbReference type="NCBI Taxonomy" id="284812"/>
    <lineage>
        <taxon>Eukaryota</taxon>
        <taxon>Fungi</taxon>
        <taxon>Dikarya</taxon>
        <taxon>Ascomycota</taxon>
        <taxon>Taphrinomycotina</taxon>
        <taxon>Schizosaccharomycetes</taxon>
        <taxon>Schizosaccharomycetales</taxon>
        <taxon>Schizosaccharomycetaceae</taxon>
        <taxon>Schizosaccharomyces</taxon>
    </lineage>
</organism>
<keyword id="KW-0963">Cytoplasm</keyword>
<keyword id="KW-0597">Phosphoprotein</keyword>
<keyword id="KW-1185">Reference proteome</keyword>
<keyword id="KW-0694">RNA-binding</keyword>
<dbReference type="EMBL" id="AJ000318">
    <property type="protein sequence ID" value="CAA03989.1"/>
    <property type="molecule type" value="Genomic_DNA"/>
</dbReference>
<dbReference type="EMBL" id="CU329671">
    <property type="protein sequence ID" value="CAA18401.1"/>
    <property type="molecule type" value="Genomic_DNA"/>
</dbReference>
<dbReference type="PIR" id="T45516">
    <property type="entry name" value="T45516"/>
</dbReference>
<dbReference type="RefSeq" id="NP_595728.1">
    <property type="nucleotide sequence ID" value="NM_001021626.2"/>
</dbReference>
<dbReference type="SMR" id="O14369"/>
<dbReference type="BioGRID" id="277056">
    <property type="interactions" value="63"/>
</dbReference>
<dbReference type="FunCoup" id="O14369">
    <property type="interactions" value="743"/>
</dbReference>
<dbReference type="STRING" id="284812.O14369"/>
<dbReference type="iPTMnet" id="O14369"/>
<dbReference type="SwissPalm" id="O14369"/>
<dbReference type="PaxDb" id="4896-SPBC18H10.04c.1"/>
<dbReference type="EnsemblFungi" id="SPBC18H10.04c.1">
    <property type="protein sequence ID" value="SPBC18H10.04c.1:pep"/>
    <property type="gene ID" value="SPBC18H10.04c"/>
</dbReference>
<dbReference type="GeneID" id="2540528"/>
<dbReference type="KEGG" id="spo:2540528"/>
<dbReference type="PomBase" id="SPBC18H10.04c">
    <property type="gene designation" value="sce3"/>
</dbReference>
<dbReference type="VEuPathDB" id="FungiDB:SPBC18H10.04c"/>
<dbReference type="eggNOG" id="KOG0118">
    <property type="taxonomic scope" value="Eukaryota"/>
</dbReference>
<dbReference type="HOGENOM" id="CLU_712052_0_0_1"/>
<dbReference type="InParanoid" id="O14369"/>
<dbReference type="OMA" id="GPEDRGM"/>
<dbReference type="PhylomeDB" id="O14369"/>
<dbReference type="Reactome" id="R-SPO-156827">
    <property type="pathway name" value="L13a-mediated translational silencing of Ceruloplasmin expression"/>
</dbReference>
<dbReference type="Reactome" id="R-SPO-166208">
    <property type="pathway name" value="mTORC1-mediated signalling"/>
</dbReference>
<dbReference type="Reactome" id="R-SPO-72649">
    <property type="pathway name" value="Translation initiation complex formation"/>
</dbReference>
<dbReference type="Reactome" id="R-SPO-72662">
    <property type="pathway name" value="Activation of the mRNA upon binding of the cap-binding complex and eIFs, and subsequent binding to 43S"/>
</dbReference>
<dbReference type="Reactome" id="R-SPO-72702">
    <property type="pathway name" value="Ribosomal scanning and start codon recognition"/>
</dbReference>
<dbReference type="Reactome" id="R-SPO-72706">
    <property type="pathway name" value="GTP hydrolysis and joining of the 60S ribosomal subunit"/>
</dbReference>
<dbReference type="PRO" id="PR:O14369"/>
<dbReference type="Proteomes" id="UP000002485">
    <property type="component" value="Chromosome II"/>
</dbReference>
<dbReference type="GO" id="GO:0005737">
    <property type="term" value="C:cytoplasm"/>
    <property type="evidence" value="ECO:0000314"/>
    <property type="project" value="PomBase"/>
</dbReference>
<dbReference type="GO" id="GO:0005829">
    <property type="term" value="C:cytosol"/>
    <property type="evidence" value="ECO:0007005"/>
    <property type="project" value="PomBase"/>
</dbReference>
<dbReference type="GO" id="GO:0005730">
    <property type="term" value="C:nucleolus"/>
    <property type="evidence" value="ECO:0000318"/>
    <property type="project" value="GO_Central"/>
</dbReference>
<dbReference type="GO" id="GO:0043024">
    <property type="term" value="F:ribosomal small subunit binding"/>
    <property type="evidence" value="ECO:0000318"/>
    <property type="project" value="GO_Central"/>
</dbReference>
<dbReference type="GO" id="GO:0003723">
    <property type="term" value="F:RNA binding"/>
    <property type="evidence" value="ECO:0000255"/>
    <property type="project" value="PomBase"/>
</dbReference>
<dbReference type="GO" id="GO:0033592">
    <property type="term" value="F:RNA strand annealing activity"/>
    <property type="evidence" value="ECO:0000318"/>
    <property type="project" value="GO_Central"/>
</dbReference>
<dbReference type="GO" id="GO:0034057">
    <property type="term" value="F:RNA strand-exchange activity"/>
    <property type="evidence" value="ECO:0000318"/>
    <property type="project" value="GO_Central"/>
</dbReference>
<dbReference type="GO" id="GO:0003743">
    <property type="term" value="F:translation initiation factor activity"/>
    <property type="evidence" value="ECO:0000266"/>
    <property type="project" value="PomBase"/>
</dbReference>
<dbReference type="GO" id="GO:0002183">
    <property type="term" value="P:cytoplasmic translational initiation"/>
    <property type="evidence" value="ECO:0000266"/>
    <property type="project" value="PomBase"/>
</dbReference>
<dbReference type="GO" id="GO:0097010">
    <property type="term" value="P:eukaryotic translation initiation factor 4F complex assembly"/>
    <property type="evidence" value="ECO:0000318"/>
    <property type="project" value="GO_Central"/>
</dbReference>
<dbReference type="GO" id="GO:0001731">
    <property type="term" value="P:formation of translation preinitiation complex"/>
    <property type="evidence" value="ECO:0000318"/>
    <property type="project" value="GO_Central"/>
</dbReference>
<dbReference type="CDD" id="cd12402">
    <property type="entry name" value="RRM_eIF4B"/>
    <property type="match status" value="1"/>
</dbReference>
<dbReference type="Gene3D" id="3.30.70.330">
    <property type="match status" value="1"/>
</dbReference>
<dbReference type="InterPro" id="IPR033107">
    <property type="entry name" value="EIF-4B_RRM"/>
</dbReference>
<dbReference type="InterPro" id="IPR012677">
    <property type="entry name" value="Nucleotide-bd_a/b_plait_sf"/>
</dbReference>
<dbReference type="InterPro" id="IPR035979">
    <property type="entry name" value="RBD_domain_sf"/>
</dbReference>
<dbReference type="InterPro" id="IPR000504">
    <property type="entry name" value="RRM_dom"/>
</dbReference>
<dbReference type="PANTHER" id="PTHR23236">
    <property type="entry name" value="EUKARYOTIC TRANSLATION INITIATION FACTOR 4B/4H"/>
    <property type="match status" value="1"/>
</dbReference>
<dbReference type="PANTHER" id="PTHR23236:SF11">
    <property type="entry name" value="EUKARYOTIC TRANSLATION INITIATION FACTOR 4H"/>
    <property type="match status" value="1"/>
</dbReference>
<dbReference type="Pfam" id="PF00076">
    <property type="entry name" value="RRM_1"/>
    <property type="match status" value="1"/>
</dbReference>
<dbReference type="SMART" id="SM00360">
    <property type="entry name" value="RRM"/>
    <property type="match status" value="1"/>
</dbReference>
<dbReference type="SUPFAM" id="SSF54928">
    <property type="entry name" value="RNA-binding domain, RBD"/>
    <property type="match status" value="1"/>
</dbReference>
<dbReference type="PROSITE" id="PS50102">
    <property type="entry name" value="RRM"/>
    <property type="match status" value="1"/>
</dbReference>
<evidence type="ECO:0000255" key="1">
    <source>
        <dbReference type="PROSITE-ProRule" id="PRU00176"/>
    </source>
</evidence>
<evidence type="ECO:0000256" key="2">
    <source>
        <dbReference type="SAM" id="MobiDB-lite"/>
    </source>
</evidence>
<evidence type="ECO:0000269" key="3">
    <source>
    </source>
</evidence>